<comment type="function">
    <text evidence="1">The surface protein (SU) attaches the virus to the host cell by binding to its receptor. This interaction triggers the refolding of the transmembrane protein (TM) and is thought to activate its fusogenic potential by unmasking its fusion peptide. Fusion occurs at the host cell plasma membrane (By similarity).</text>
</comment>
<comment type="function">
    <text evidence="1">The transmembrane protein (TM) acts as a class I viral fusion protein. Under the current model, the protein has at least 3 conformational states: pre-fusion native state, pre-hairpin intermediate state, and post-fusion hairpin state. During viral and target cell membrane fusion, the coiled coil regions (heptad repeats) assume a trimer-of-hairpins structure, positioning the fusion peptide in close proximity to the C-terminal region of the ectodomain. The formation of this structure appears to drive apposition and subsequent fusion of viral and target cell membranes. Membranes fusion leads to delivery of the nucleocapsid into the cytoplasm (By similarity).</text>
</comment>
<comment type="subunit">
    <text evidence="1">The mature envelope protein (Env) consists of a trimer of SU-TM heterodimers attached by noncovalent interactions or by a labile interchain disulfide bond.</text>
</comment>
<comment type="subcellular location">
    <molecule>Transmembrane protein</molecule>
    <subcellularLocation>
        <location evidence="1">Virion membrane</location>
        <topology evidence="1">Single-pass type I membrane protein</topology>
    </subcellularLocation>
    <subcellularLocation>
        <location evidence="1">Host cell membrane</location>
        <topology evidence="1">Single-pass type I membrane protein</topology>
    </subcellularLocation>
</comment>
<comment type="subcellular location">
    <molecule>Surface protein</molecule>
    <subcellularLocation>
        <location>Virion membrane</location>
        <topology>Peripheral membrane protein</topology>
    </subcellularLocation>
    <subcellularLocation>
        <location evidence="1">Host cell membrane</location>
        <topology evidence="1">Peripheral membrane protein</topology>
    </subcellularLocation>
    <text evidence="1">The surface protein is not anchored to the viral envelope, but associates with the extravirion surface through its binding to TM. Both proteins are thought to be concentrated at the site of budding and incorporated into the virions possibly by contacts between the cytoplasmic tail of Env and the N-terminus of Gag (By similarity).</text>
</comment>
<comment type="PTM">
    <text evidence="1">Specific enzymatic cleavages in vivo yield mature proteins. Envelope glycoproteins are synthesized as an inactive precursor that is N-glycosylated and processed likely by host cell furin or by a furin-like protease in the Golgi to yield the mature SU and TM proteins. The cleavage site between SU and TM requires the minimal sequence [KR]-X-[KR]-R (By similarity).</text>
</comment>
<organismHost>
    <name type="scientific">Mus musculus</name>
    <name type="common">Mouse</name>
    <dbReference type="NCBI Taxonomy" id="10090"/>
</organismHost>
<keyword id="KW-0165">Cleavage on pair of basic residues</keyword>
<keyword id="KW-0175">Coiled coil</keyword>
<keyword id="KW-0903">Direct protein sequencing</keyword>
<keyword id="KW-1015">Disulfide bond</keyword>
<keyword id="KW-1169">Fusion of virus membrane with host cell membrane</keyword>
<keyword id="KW-1168">Fusion of virus membrane with host membrane</keyword>
<keyword id="KW-0325">Glycoprotein</keyword>
<keyword id="KW-1032">Host cell membrane</keyword>
<keyword id="KW-1043">Host membrane</keyword>
<keyword id="KW-0945">Host-virus interaction</keyword>
<keyword id="KW-0472">Membrane</keyword>
<keyword id="KW-0732">Signal</keyword>
<keyword id="KW-0812">Transmembrane</keyword>
<keyword id="KW-1133">Transmembrane helix</keyword>
<keyword id="KW-1161">Viral attachment to host cell</keyword>
<keyword id="KW-0261">Viral envelope protein</keyword>
<keyword id="KW-1162">Viral penetration into host cytoplasm</keyword>
<keyword id="KW-0946">Virion</keyword>
<keyword id="KW-1160">Virus entry into host cell</keyword>
<dbReference type="EMBL" id="X01811">
    <property type="protein sequence ID" value="CAA25955.1"/>
    <property type="molecule type" value="Genomic_RNA"/>
</dbReference>
<dbReference type="PIR" id="A03972">
    <property type="entry name" value="VCMVM"/>
</dbReference>
<dbReference type="BindingDB" id="P03374"/>
<dbReference type="ChEMBL" id="CHEMBL5825"/>
<dbReference type="GlyCosmos" id="P03374">
    <property type="glycosylation" value="4 sites, No reported glycans"/>
</dbReference>
<dbReference type="ABCD" id="P03374">
    <property type="antibodies" value="3 sequenced antibodies"/>
</dbReference>
<dbReference type="GO" id="GO:0020002">
    <property type="term" value="C:host cell plasma membrane"/>
    <property type="evidence" value="ECO:0007669"/>
    <property type="project" value="UniProtKB-SubCell"/>
</dbReference>
<dbReference type="GO" id="GO:0016020">
    <property type="term" value="C:membrane"/>
    <property type="evidence" value="ECO:0007669"/>
    <property type="project" value="UniProtKB-KW"/>
</dbReference>
<dbReference type="GO" id="GO:0019031">
    <property type="term" value="C:viral envelope"/>
    <property type="evidence" value="ECO:0007669"/>
    <property type="project" value="UniProtKB-KW"/>
</dbReference>
<dbReference type="GO" id="GO:0055036">
    <property type="term" value="C:virion membrane"/>
    <property type="evidence" value="ECO:0007669"/>
    <property type="project" value="UniProtKB-SubCell"/>
</dbReference>
<dbReference type="GO" id="GO:0005198">
    <property type="term" value="F:structural molecule activity"/>
    <property type="evidence" value="ECO:0007669"/>
    <property type="project" value="InterPro"/>
</dbReference>
<dbReference type="GO" id="GO:0019064">
    <property type="term" value="P:fusion of virus membrane with host plasma membrane"/>
    <property type="evidence" value="ECO:0007669"/>
    <property type="project" value="UniProtKB-KW"/>
</dbReference>
<dbReference type="GO" id="GO:0046718">
    <property type="term" value="P:symbiont entry into host cell"/>
    <property type="evidence" value="ECO:0007669"/>
    <property type="project" value="UniProtKB-KW"/>
</dbReference>
<dbReference type="GO" id="GO:0019062">
    <property type="term" value="P:virion attachment to host cell"/>
    <property type="evidence" value="ECO:0007669"/>
    <property type="project" value="UniProtKB-KW"/>
</dbReference>
<dbReference type="CDD" id="cd09909">
    <property type="entry name" value="HIV-1-like_HR1-HR2"/>
    <property type="match status" value="1"/>
</dbReference>
<dbReference type="InterPro" id="IPR000328">
    <property type="entry name" value="GP41-like"/>
</dbReference>
<dbReference type="InterPro" id="IPR051255">
    <property type="entry name" value="Retroviral_env_glycoprotein"/>
</dbReference>
<dbReference type="PANTHER" id="PTHR34313">
    <property type="entry name" value="ENDOGENOUS RETROVIRUS GROUP K MEMBER 113 ENV POLYPROTEIN-RELATED"/>
    <property type="match status" value="1"/>
</dbReference>
<dbReference type="PANTHER" id="PTHR34313:SF2">
    <property type="entry name" value="ENDOGENOUS RETROVIRUS GROUP K MEMBER 21 ENV POLYPROTEIN-LIKE"/>
    <property type="match status" value="1"/>
</dbReference>
<dbReference type="Pfam" id="PF00517">
    <property type="entry name" value="GP41"/>
    <property type="match status" value="1"/>
</dbReference>
<name>ENV_MMTVG</name>
<gene>
    <name type="primary">env</name>
</gene>
<reference key="1">
    <citation type="journal article" date="1983" name="EMBO J.">
        <title>Sequence and expression of the mouse mammary tumour virus env gene.</title>
        <authorList>
            <person name="Redmond S.M.S."/>
            <person name="Dickson C."/>
        </authorList>
    </citation>
    <scope>NUCLEOTIDE SEQUENCE [GENOMIC RNA]</scope>
</reference>
<reference key="2">
    <citation type="journal article" date="1983" name="J. Virol.">
        <title>Terminal amino acid sequences and proteolytic cleavage sites of mouse mammary tumor virus env gene products.</title>
        <authorList>
            <person name="Henderson L.E."/>
            <person name="Sowder R."/>
            <person name="Smythers G."/>
            <person name="Oroszlan S."/>
        </authorList>
    </citation>
    <scope>PROTEIN SEQUENCE OF 684-688</scope>
    <scope>PROTEOLYTIC PROCESSING OF POLYPROTEIN</scope>
</reference>
<protein>
    <recommendedName>
        <fullName>Envelope glycoprotein gp70</fullName>
    </recommendedName>
    <alternativeName>
        <fullName>Env polyprotein</fullName>
    </alternativeName>
    <component>
        <recommendedName>
            <fullName>Surface protein</fullName>
            <shortName>SU</shortName>
        </recommendedName>
        <alternativeName>
            <fullName>Glycoprotein 52</fullName>
            <shortName>gp52</shortName>
        </alternativeName>
    </component>
    <component>
        <recommendedName>
            <fullName>Transmembrane protein</fullName>
            <shortName>TM</shortName>
        </recommendedName>
        <alternativeName>
            <fullName>Glycoprotein 36</fullName>
            <shortName>gp36</shortName>
        </alternativeName>
    </component>
</protein>
<organism>
    <name type="scientific">Mouse mammary tumor virus (strain GR)</name>
    <name type="common">MMTV</name>
    <dbReference type="NCBI Taxonomy" id="11760"/>
    <lineage>
        <taxon>Viruses</taxon>
        <taxon>Riboviria</taxon>
        <taxon>Pararnavirae</taxon>
        <taxon>Artverviricota</taxon>
        <taxon>Revtraviricetes</taxon>
        <taxon>Ortervirales</taxon>
        <taxon>Retroviridae</taxon>
        <taxon>Orthoretrovirinae</taxon>
        <taxon>Betaretrovirus</taxon>
        <taxon>Mouse mammary tumor virus</taxon>
    </lineage>
</organism>
<feature type="signal peptide" evidence="1">
    <location>
        <begin position="1"/>
        <end position="98"/>
    </location>
</feature>
<feature type="chain" id="PRO_0000239593" description="Envelope glycoprotein gp70">
    <location>
        <begin position="99"/>
        <end position="688"/>
    </location>
</feature>
<feature type="chain" id="PRO_0000040783" description="Surface protein">
    <location>
        <begin position="99"/>
        <end position="454"/>
    </location>
</feature>
<feature type="propeptide" id="PRO_0000040784" evidence="1">
    <location>
        <begin position="455"/>
        <end position="456"/>
    </location>
</feature>
<feature type="chain" id="PRO_0000040785" description="Transmembrane protein">
    <location>
        <begin position="457"/>
        <end position="688"/>
    </location>
</feature>
<feature type="topological domain" description="Extracellular" evidence="2">
    <location>
        <begin position="99"/>
        <end position="624"/>
    </location>
</feature>
<feature type="transmembrane region" description="Helical" evidence="2">
    <location>
        <begin position="625"/>
        <end position="645"/>
    </location>
</feature>
<feature type="topological domain" description="Cytoplasmic" evidence="2">
    <location>
        <begin position="646"/>
        <end position="688"/>
    </location>
</feature>
<feature type="region of interest" description="Disordered" evidence="3">
    <location>
        <begin position="1"/>
        <end position="31"/>
    </location>
</feature>
<feature type="region of interest" description="Fusion peptide" evidence="1">
    <location>
        <begin position="457"/>
        <end position="477"/>
    </location>
</feature>
<feature type="region of interest" description="Immunosuppression" evidence="1">
    <location>
        <begin position="463"/>
        <end position="481"/>
    </location>
</feature>
<feature type="coiled-coil region" evidence="2">
    <location>
        <begin position="426"/>
        <end position="474"/>
    </location>
</feature>
<feature type="coiled-coil region" evidence="2">
    <location>
        <begin position="511"/>
        <end position="541"/>
    </location>
</feature>
<feature type="compositionally biased region" description="Polar residues" evidence="3">
    <location>
        <begin position="1"/>
        <end position="15"/>
    </location>
</feature>
<feature type="compositionally biased region" description="Basic residues" evidence="3">
    <location>
        <begin position="20"/>
        <end position="31"/>
    </location>
</feature>
<feature type="site" description="Involved in binding to the cell receptor" evidence="1">
    <location>
        <position position="138"/>
    </location>
</feature>
<feature type="site" description="Cleavage; by host" evidence="1">
    <location>
        <begin position="454"/>
        <end position="455"/>
    </location>
</feature>
<feature type="glycosylation site" description="N-linked (GlcNAc...) asparagine; by host" evidence="2">
    <location>
        <position position="127"/>
    </location>
</feature>
<feature type="glycosylation site" description="N-linked (GlcNAc...) asparagine; by host" evidence="2">
    <location>
        <position position="143"/>
    </location>
</feature>
<feature type="glycosylation site" description="N-linked (GlcNAc...) asparagine; by host" evidence="2">
    <location>
        <position position="498"/>
    </location>
</feature>
<feature type="glycosylation site" description="N-linked (GlcNAc...) asparagine; by host" evidence="2">
    <location>
        <position position="557"/>
    </location>
</feature>
<proteinExistence type="evidence at protein level"/>
<accession>P03374</accession>
<sequence length="688" mass="77221">MPNHQSGSPTGSSDLLLSGKKQRPHLALRRKRRREMRKINRKVRRMNLAPIKEKTAWQHLQALISEAEEVLKTSQTPQNSLTLFLALLSVLGPPPVTGESYWAYLPKPPILHPVGWGSTDPIRVLTNQTMYLGGSPDFHGFRNMSGNVHFEGKSDTLPICFSFSFSTPTGCFQVDKQVFLSDTPTVDNNKPGGKGDKRRMWELWLHTLGNSGANTKLVPIKKKLPPKYPHCQIAFKKDAFWEGDESAPPRWLPCAFPDKGVSFSPKGALGLLWDFSLPSPSVDQSDQIKSKKDLFGNYTPPVNKEVHRWYEAGWVEPTWFWENSPKDPNDRDFTALVPHTELFRLVAASRHLILKRPGFQEHEMIPTSACVTYPYAILLGLPQLIDIEKRGSTFHISCSSCRLTNCLDSSAYDYAAIIVKRPPYVLLPVDIGDEPWFDDSAIQTFRYATDLIRAKRFVAAIILGISALIAIITSFAVATTALVKEMQTATFVNNLHRNVTLALSEQRIIDLKLEARLNALEEVVLELGQDVANLKTRMSTRCHANYDFICVTPLPYNATEDWERTRAHLLGIWNDNEISYNIQELTNLISDMSKQHIDAVDLSGLAQSFANGVKALNPLDWTQYFIFIGVGALLLVIVLMIFPIVFQCLAKSLDQVQSDLNVLLLKKKKGGNAAPAAEMVELPRVSYT</sequence>
<evidence type="ECO:0000250" key="1"/>
<evidence type="ECO:0000255" key="2"/>
<evidence type="ECO:0000256" key="3">
    <source>
        <dbReference type="SAM" id="MobiDB-lite"/>
    </source>
</evidence>